<keyword id="KW-0004">4Fe-4S</keyword>
<keyword id="KW-0028">Amino-acid biosynthesis</keyword>
<keyword id="KW-0100">Branched-chain amino acid biosynthesis</keyword>
<keyword id="KW-0408">Iron</keyword>
<keyword id="KW-0411">Iron-sulfur</keyword>
<keyword id="KW-0432">Leucine biosynthesis</keyword>
<keyword id="KW-0456">Lyase</keyword>
<keyword id="KW-0479">Metal-binding</keyword>
<keyword id="KW-0614">Plasmid</keyword>
<proteinExistence type="inferred from homology"/>
<feature type="chain" id="PRO_0000076727" description="3-isopropylmalate dehydratase large subunit">
    <location>
        <begin position="1"/>
        <end position="443" status="greater than"/>
    </location>
</feature>
<feature type="binding site" evidence="1">
    <location>
        <position position="347"/>
    </location>
    <ligand>
        <name>[4Fe-4S] cluster</name>
        <dbReference type="ChEBI" id="CHEBI:49883"/>
    </ligand>
</feature>
<feature type="binding site" evidence="1">
    <location>
        <position position="407"/>
    </location>
    <ligand>
        <name>[4Fe-4S] cluster</name>
        <dbReference type="ChEBI" id="CHEBI:49883"/>
    </ligand>
</feature>
<feature type="binding site" evidence="1">
    <location>
        <position position="410"/>
    </location>
    <ligand>
        <name>[4Fe-4S] cluster</name>
        <dbReference type="ChEBI" id="CHEBI:49883"/>
    </ligand>
</feature>
<feature type="non-terminal residue">
    <location>
        <position position="443"/>
    </location>
</feature>
<dbReference type="EC" id="4.2.1.33" evidence="1"/>
<dbReference type="EMBL" id="AF197450">
    <property type="protein sequence ID" value="AAG31385.1"/>
    <property type="molecule type" value="Genomic_DNA"/>
</dbReference>
<dbReference type="SMR" id="Q9EVI0"/>
<dbReference type="UniPathway" id="UPA00048">
    <property type="reaction ID" value="UER00071"/>
</dbReference>
<dbReference type="GO" id="GO:0003861">
    <property type="term" value="F:3-isopropylmalate dehydratase activity"/>
    <property type="evidence" value="ECO:0007669"/>
    <property type="project" value="UniProtKB-EC"/>
</dbReference>
<dbReference type="GO" id="GO:0051539">
    <property type="term" value="F:4 iron, 4 sulfur cluster binding"/>
    <property type="evidence" value="ECO:0007669"/>
    <property type="project" value="UniProtKB-KW"/>
</dbReference>
<dbReference type="GO" id="GO:0046872">
    <property type="term" value="F:metal ion binding"/>
    <property type="evidence" value="ECO:0007669"/>
    <property type="project" value="UniProtKB-KW"/>
</dbReference>
<dbReference type="GO" id="GO:0009098">
    <property type="term" value="P:L-leucine biosynthetic process"/>
    <property type="evidence" value="ECO:0007669"/>
    <property type="project" value="UniProtKB-UniPathway"/>
</dbReference>
<dbReference type="CDD" id="cd01583">
    <property type="entry name" value="IPMI"/>
    <property type="match status" value="1"/>
</dbReference>
<dbReference type="Gene3D" id="3.30.499.10">
    <property type="entry name" value="Aconitase, domain 3"/>
    <property type="match status" value="2"/>
</dbReference>
<dbReference type="HAMAP" id="MF_01026">
    <property type="entry name" value="LeuC_type1"/>
    <property type="match status" value="1"/>
</dbReference>
<dbReference type="InterPro" id="IPR004430">
    <property type="entry name" value="3-IsopropMal_deHydase_lsu"/>
</dbReference>
<dbReference type="InterPro" id="IPR015931">
    <property type="entry name" value="Acnase/IPM_dHydase_lsu_aba_1/3"/>
</dbReference>
<dbReference type="InterPro" id="IPR001030">
    <property type="entry name" value="Acoase/IPM_deHydtase_lsu_aba"/>
</dbReference>
<dbReference type="InterPro" id="IPR018136">
    <property type="entry name" value="Aconitase_4Fe-4S_BS"/>
</dbReference>
<dbReference type="InterPro" id="IPR036008">
    <property type="entry name" value="Aconitase_4Fe-4S_dom"/>
</dbReference>
<dbReference type="InterPro" id="IPR050067">
    <property type="entry name" value="IPM_dehydratase_rel_enz"/>
</dbReference>
<dbReference type="InterPro" id="IPR033941">
    <property type="entry name" value="IPMI_cat"/>
</dbReference>
<dbReference type="NCBIfam" id="TIGR00170">
    <property type="entry name" value="leuC"/>
    <property type="match status" value="1"/>
</dbReference>
<dbReference type="NCBIfam" id="NF004016">
    <property type="entry name" value="PRK05478.1"/>
    <property type="match status" value="1"/>
</dbReference>
<dbReference type="NCBIfam" id="NF009116">
    <property type="entry name" value="PRK12466.1"/>
    <property type="match status" value="1"/>
</dbReference>
<dbReference type="PANTHER" id="PTHR43822:SF9">
    <property type="entry name" value="3-ISOPROPYLMALATE DEHYDRATASE"/>
    <property type="match status" value="1"/>
</dbReference>
<dbReference type="PANTHER" id="PTHR43822">
    <property type="entry name" value="HOMOACONITASE, MITOCHONDRIAL-RELATED"/>
    <property type="match status" value="1"/>
</dbReference>
<dbReference type="Pfam" id="PF00330">
    <property type="entry name" value="Aconitase"/>
    <property type="match status" value="1"/>
</dbReference>
<dbReference type="PRINTS" id="PR00415">
    <property type="entry name" value="ACONITASE"/>
</dbReference>
<dbReference type="SUPFAM" id="SSF53732">
    <property type="entry name" value="Aconitase iron-sulfur domain"/>
    <property type="match status" value="1"/>
</dbReference>
<dbReference type="PROSITE" id="PS00450">
    <property type="entry name" value="ACONITASE_1"/>
    <property type="match status" value="1"/>
</dbReference>
<dbReference type="PROSITE" id="PS01244">
    <property type="entry name" value="ACONITASE_2"/>
    <property type="match status" value="1"/>
</dbReference>
<name>LEUC_BUCUO</name>
<sequence length="443" mass="49752">MSKTLYQKIYDSHVVCEDKNNTSILYIDLHLLHEVTSPQAFDSLRNKKRKVRQVNKTFATMDHNVSTQIKNINASGSMAKKQMEQLIKNCQEFNISLYDINNPNQGIVHVIAPEKGMTLPGMTIVCGDSHTSTHGAFGALSFGIGTSEVEHVLATQTLKQKRFKNMKIEIVGEIPKFVTAKDIILFIIGKLGSSSGTGYVIEFCGNVVKKMSMEERMTVCNMAIEMGAKSGLIAPDEITYEYLKNKMYSPYGIFWKNSLDYWRFLKSDSDAQFDKYFTIDISNLAPQITWGTNPDQVISINEKIPDYNKIDSLVKKDAAKSACKYMGLRSDTYLTNISIDRVFIGSCTNARIEDLRSASVILKNKKIANHVKAIVVPGSGLVKKQAEKEGLDKIFIDSGFEWRLPGCSMCLGMNKDRLNFQERCASHSNRNFEGRQGRGGRTH</sequence>
<gene>
    <name evidence="1" type="primary">leuC</name>
</gene>
<reference key="1">
    <citation type="journal article" date="2001" name="J. Bacteriol.">
        <title>Vertical transmission of biosynthetic plasmids in aphid endosymbionts (Buchnera).</title>
        <authorList>
            <person name="Wernegreen J.J."/>
            <person name="Moran N.A."/>
        </authorList>
    </citation>
    <scope>NUCLEOTIDE SEQUENCE [GENOMIC DNA]</scope>
</reference>
<organism>
    <name type="scientific">Buchnera aphidicola subsp. Uroleucon obscurum</name>
    <dbReference type="NCBI Taxonomy" id="118119"/>
    <lineage>
        <taxon>Bacteria</taxon>
        <taxon>Pseudomonadati</taxon>
        <taxon>Pseudomonadota</taxon>
        <taxon>Gammaproteobacteria</taxon>
        <taxon>Enterobacterales</taxon>
        <taxon>Erwiniaceae</taxon>
        <taxon>Buchnera</taxon>
    </lineage>
</organism>
<geneLocation type="plasmid">
    <name>pLeu</name>
    <name>pBAp1</name>
</geneLocation>
<evidence type="ECO:0000255" key="1">
    <source>
        <dbReference type="HAMAP-Rule" id="MF_01026"/>
    </source>
</evidence>
<protein>
    <recommendedName>
        <fullName evidence="1">3-isopropylmalate dehydratase large subunit</fullName>
        <ecNumber evidence="1">4.2.1.33</ecNumber>
    </recommendedName>
    <alternativeName>
        <fullName evidence="1">Alpha-IPM isomerase</fullName>
        <shortName evidence="1">IPMI</shortName>
    </alternativeName>
    <alternativeName>
        <fullName evidence="1">Isopropylmalate isomerase</fullName>
    </alternativeName>
</protein>
<accession>Q9EVI0</accession>
<comment type="function">
    <text evidence="1">Catalyzes the isomerization between 2-isopropylmalate and 3-isopropylmalate, via the formation of 2-isopropylmaleate.</text>
</comment>
<comment type="catalytic activity">
    <reaction evidence="1">
        <text>(2R,3S)-3-isopropylmalate = (2S)-2-isopropylmalate</text>
        <dbReference type="Rhea" id="RHEA:32287"/>
        <dbReference type="ChEBI" id="CHEBI:1178"/>
        <dbReference type="ChEBI" id="CHEBI:35121"/>
        <dbReference type="EC" id="4.2.1.33"/>
    </reaction>
</comment>
<comment type="cofactor">
    <cofactor evidence="1">
        <name>[4Fe-4S] cluster</name>
        <dbReference type="ChEBI" id="CHEBI:49883"/>
    </cofactor>
    <text evidence="1">Binds 1 [4Fe-4S] cluster per subunit.</text>
</comment>
<comment type="pathway">
    <text evidence="1">Amino-acid biosynthesis; L-leucine biosynthesis; L-leucine from 3-methyl-2-oxobutanoate: step 2/4.</text>
</comment>
<comment type="subunit">
    <text evidence="1">Heterodimer of LeuC and LeuD.</text>
</comment>
<comment type="similarity">
    <text evidence="1">Belongs to the aconitase/IPM isomerase family. LeuC type 1 subfamily.</text>
</comment>